<proteinExistence type="inferred from homology"/>
<accession>P74786</accession>
<dbReference type="EMBL" id="BA000022">
    <property type="protein sequence ID" value="BAA10071.1"/>
    <property type="molecule type" value="Genomic_DNA"/>
</dbReference>
<dbReference type="PIR" id="S76093">
    <property type="entry name" value="S76093"/>
</dbReference>
<dbReference type="IntAct" id="P74786">
    <property type="interactions" value="10"/>
</dbReference>
<dbReference type="STRING" id="1148.gene:10499563"/>
<dbReference type="PaxDb" id="1148-1673334"/>
<dbReference type="EnsemblBacteria" id="BAA10071">
    <property type="protein sequence ID" value="BAA10071"/>
    <property type="gene ID" value="BAA10071"/>
</dbReference>
<dbReference type="KEGG" id="syn:ssl0294"/>
<dbReference type="eggNOG" id="ENOG5032ZTM">
    <property type="taxonomic scope" value="Bacteria"/>
</dbReference>
<dbReference type="InParanoid" id="P74786"/>
<dbReference type="PhylomeDB" id="P74786"/>
<dbReference type="Proteomes" id="UP000001425">
    <property type="component" value="Chromosome"/>
</dbReference>
<dbReference type="InterPro" id="IPR040278">
    <property type="entry name" value="UPF0426"/>
</dbReference>
<dbReference type="PANTHER" id="PTHR35996:SF1">
    <property type="entry name" value="OS04G0528100 PROTEIN"/>
    <property type="match status" value="1"/>
</dbReference>
<dbReference type="PANTHER" id="PTHR35996">
    <property type="entry name" value="OSJNBA0038O10.25 PROTEIN"/>
    <property type="match status" value="1"/>
</dbReference>
<name>Y294_SYNY3</name>
<gene>
    <name type="ordered locus">ssl0294</name>
</gene>
<evidence type="ECO:0000305" key="1"/>
<feature type="chain" id="PRO_0000286545" description="UPF0426 protein ssl0294">
    <location>
        <begin position="1"/>
        <end position="70"/>
    </location>
</feature>
<organism>
    <name type="scientific">Synechocystis sp. (strain ATCC 27184 / PCC 6803 / Kazusa)</name>
    <dbReference type="NCBI Taxonomy" id="1111708"/>
    <lineage>
        <taxon>Bacteria</taxon>
        <taxon>Bacillati</taxon>
        <taxon>Cyanobacteriota</taxon>
        <taxon>Cyanophyceae</taxon>
        <taxon>Synechococcales</taxon>
        <taxon>Merismopediaceae</taxon>
        <taxon>Synechocystis</taxon>
    </lineage>
</organism>
<protein>
    <recommendedName>
        <fullName>UPF0426 protein ssl0294</fullName>
    </recommendedName>
</protein>
<keyword id="KW-1185">Reference proteome</keyword>
<sequence length="70" mass="7833">MFLEELKPVTRELCQQPIAFAGGFVSGVLRLKLTDDPLKKWLQKQGVTDFSGADINQTAQDNRPQSIDID</sequence>
<reference key="1">
    <citation type="journal article" date="1996" name="DNA Res.">
        <title>Sequence analysis of the genome of the unicellular cyanobacterium Synechocystis sp. strain PCC6803. II. Sequence determination of the entire genome and assignment of potential protein-coding regions.</title>
        <authorList>
            <person name="Kaneko T."/>
            <person name="Sato S."/>
            <person name="Kotani H."/>
            <person name="Tanaka A."/>
            <person name="Asamizu E."/>
            <person name="Nakamura Y."/>
            <person name="Miyajima N."/>
            <person name="Hirosawa M."/>
            <person name="Sugiura M."/>
            <person name="Sasamoto S."/>
            <person name="Kimura T."/>
            <person name="Hosouchi T."/>
            <person name="Matsuno A."/>
            <person name="Muraki A."/>
            <person name="Nakazaki N."/>
            <person name="Naruo K."/>
            <person name="Okumura S."/>
            <person name="Shimpo S."/>
            <person name="Takeuchi C."/>
            <person name="Wada T."/>
            <person name="Watanabe A."/>
            <person name="Yamada M."/>
            <person name="Yasuda M."/>
            <person name="Tabata S."/>
        </authorList>
    </citation>
    <scope>NUCLEOTIDE SEQUENCE [LARGE SCALE GENOMIC DNA]</scope>
    <source>
        <strain>ATCC 27184 / PCC 6803 / Kazusa</strain>
    </source>
</reference>
<comment type="similarity">
    <text evidence="1">Belongs to the UPF0426 family.</text>
</comment>